<reference key="1">
    <citation type="submission" date="2006-09" db="EMBL/GenBank/DDBJ databases">
        <title>Complete sequence of chromosome 1 of Shewanella sp. ANA-3.</title>
        <authorList>
            <person name="Copeland A."/>
            <person name="Lucas S."/>
            <person name="Lapidus A."/>
            <person name="Barry K."/>
            <person name="Detter J.C."/>
            <person name="Glavina del Rio T."/>
            <person name="Hammon N."/>
            <person name="Israni S."/>
            <person name="Dalin E."/>
            <person name="Tice H."/>
            <person name="Pitluck S."/>
            <person name="Chertkov O."/>
            <person name="Brettin T."/>
            <person name="Bruce D."/>
            <person name="Han C."/>
            <person name="Tapia R."/>
            <person name="Gilna P."/>
            <person name="Schmutz J."/>
            <person name="Larimer F."/>
            <person name="Land M."/>
            <person name="Hauser L."/>
            <person name="Kyrpides N."/>
            <person name="Kim E."/>
            <person name="Newman D."/>
            <person name="Salticov C."/>
            <person name="Konstantinidis K."/>
            <person name="Klappenback J."/>
            <person name="Tiedje J."/>
            <person name="Richardson P."/>
        </authorList>
    </citation>
    <scope>NUCLEOTIDE SEQUENCE [LARGE SCALE GENOMIC DNA]</scope>
    <source>
        <strain>ANA-3</strain>
    </source>
</reference>
<proteinExistence type="inferred from homology"/>
<feature type="chain" id="PRO_1000026046" description="Thiazole synthase">
    <location>
        <begin position="1"/>
        <end position="252"/>
    </location>
</feature>
<feature type="active site" description="Schiff-base intermediate with DXP" evidence="1">
    <location>
        <position position="95"/>
    </location>
</feature>
<feature type="binding site" evidence="1">
    <location>
        <position position="156"/>
    </location>
    <ligand>
        <name>1-deoxy-D-xylulose 5-phosphate</name>
        <dbReference type="ChEBI" id="CHEBI:57792"/>
    </ligand>
</feature>
<feature type="binding site" evidence="1">
    <location>
        <begin position="182"/>
        <end position="183"/>
    </location>
    <ligand>
        <name>1-deoxy-D-xylulose 5-phosphate</name>
        <dbReference type="ChEBI" id="CHEBI:57792"/>
    </ligand>
</feature>
<feature type="binding site" evidence="1">
    <location>
        <begin position="204"/>
        <end position="205"/>
    </location>
    <ligand>
        <name>1-deoxy-D-xylulose 5-phosphate</name>
        <dbReference type="ChEBI" id="CHEBI:57792"/>
    </ligand>
</feature>
<organism>
    <name type="scientific">Shewanella sp. (strain ANA-3)</name>
    <dbReference type="NCBI Taxonomy" id="94122"/>
    <lineage>
        <taxon>Bacteria</taxon>
        <taxon>Pseudomonadati</taxon>
        <taxon>Pseudomonadota</taxon>
        <taxon>Gammaproteobacteria</taxon>
        <taxon>Alteromonadales</taxon>
        <taxon>Shewanellaceae</taxon>
        <taxon>Shewanella</taxon>
    </lineage>
</organism>
<accession>A0KWK2</accession>
<name>THIG_SHESA</name>
<evidence type="ECO:0000255" key="1">
    <source>
        <dbReference type="HAMAP-Rule" id="MF_00443"/>
    </source>
</evidence>
<keyword id="KW-0963">Cytoplasm</keyword>
<keyword id="KW-0704">Schiff base</keyword>
<keyword id="KW-0784">Thiamine biosynthesis</keyword>
<keyword id="KW-0808">Transferase</keyword>
<sequence length="252" mass="26843">MLTIAGVEFESRLFTGTGKFSSSQLMLESIKASKSQLVTVAMKRIDLKTGADDLLSPLRQAGVRLLPNTSGARNAKEAIFAAELAREMLGTQWVKLEIHPDPKYLMPDAVETLAAAKTLCERGFIVMPYVHADPVLCRRLEEVGCAAVMPLASPIGTNQGLVTEPFIKMIIEQAKVPVVIDAGIGTPSHAAHAMELGADAVLVNTAIASSASPIEMAQCFKDAVDCGRRAFEAGLGRVQTQAVHTSPLTGFL</sequence>
<protein>
    <recommendedName>
        <fullName evidence="1">Thiazole synthase</fullName>
        <ecNumber evidence="1">2.8.1.10</ecNumber>
    </recommendedName>
</protein>
<gene>
    <name evidence="1" type="primary">thiG</name>
    <name type="ordered locus">Shewana3_1940</name>
</gene>
<comment type="function">
    <text evidence="1">Catalyzes the rearrangement of 1-deoxy-D-xylulose 5-phosphate (DXP) to produce the thiazole phosphate moiety of thiamine. Sulfur is provided by the thiocarboxylate moiety of the carrier protein ThiS. In vitro, sulfur can be provided by H(2)S.</text>
</comment>
<comment type="catalytic activity">
    <reaction evidence="1">
        <text>[ThiS sulfur-carrier protein]-C-terminal-Gly-aminoethanethioate + 2-iminoacetate + 1-deoxy-D-xylulose 5-phosphate = [ThiS sulfur-carrier protein]-C-terminal Gly-Gly + 2-[(2R,5Z)-2-carboxy-4-methylthiazol-5(2H)-ylidene]ethyl phosphate + 2 H2O + H(+)</text>
        <dbReference type="Rhea" id="RHEA:26297"/>
        <dbReference type="Rhea" id="RHEA-COMP:12909"/>
        <dbReference type="Rhea" id="RHEA-COMP:19908"/>
        <dbReference type="ChEBI" id="CHEBI:15377"/>
        <dbReference type="ChEBI" id="CHEBI:15378"/>
        <dbReference type="ChEBI" id="CHEBI:57792"/>
        <dbReference type="ChEBI" id="CHEBI:62899"/>
        <dbReference type="ChEBI" id="CHEBI:77846"/>
        <dbReference type="ChEBI" id="CHEBI:90778"/>
        <dbReference type="ChEBI" id="CHEBI:232372"/>
        <dbReference type="EC" id="2.8.1.10"/>
    </reaction>
</comment>
<comment type="pathway">
    <text evidence="1">Cofactor biosynthesis; thiamine diphosphate biosynthesis.</text>
</comment>
<comment type="subunit">
    <text evidence="1">Homotetramer. Forms heterodimers with either ThiH or ThiS.</text>
</comment>
<comment type="subcellular location">
    <subcellularLocation>
        <location evidence="1">Cytoplasm</location>
    </subcellularLocation>
</comment>
<comment type="similarity">
    <text evidence="1">Belongs to the ThiG family.</text>
</comment>
<dbReference type="EC" id="2.8.1.10" evidence="1"/>
<dbReference type="EMBL" id="CP000469">
    <property type="protein sequence ID" value="ABK48171.1"/>
    <property type="molecule type" value="Genomic_DNA"/>
</dbReference>
<dbReference type="RefSeq" id="WP_011716938.1">
    <property type="nucleotide sequence ID" value="NC_008577.1"/>
</dbReference>
<dbReference type="SMR" id="A0KWK2"/>
<dbReference type="STRING" id="94122.Shewana3_1940"/>
<dbReference type="KEGG" id="shn:Shewana3_1940"/>
<dbReference type="eggNOG" id="COG2022">
    <property type="taxonomic scope" value="Bacteria"/>
</dbReference>
<dbReference type="HOGENOM" id="CLU_062233_1_0_6"/>
<dbReference type="OrthoDB" id="9805935at2"/>
<dbReference type="UniPathway" id="UPA00060"/>
<dbReference type="Proteomes" id="UP000002589">
    <property type="component" value="Chromosome"/>
</dbReference>
<dbReference type="GO" id="GO:0005737">
    <property type="term" value="C:cytoplasm"/>
    <property type="evidence" value="ECO:0007669"/>
    <property type="project" value="UniProtKB-SubCell"/>
</dbReference>
<dbReference type="GO" id="GO:1990107">
    <property type="term" value="F:thiazole synthase activity"/>
    <property type="evidence" value="ECO:0007669"/>
    <property type="project" value="UniProtKB-EC"/>
</dbReference>
<dbReference type="GO" id="GO:0009229">
    <property type="term" value="P:thiamine diphosphate biosynthetic process"/>
    <property type="evidence" value="ECO:0007669"/>
    <property type="project" value="UniProtKB-UniRule"/>
</dbReference>
<dbReference type="CDD" id="cd04728">
    <property type="entry name" value="ThiG"/>
    <property type="match status" value="1"/>
</dbReference>
<dbReference type="FunFam" id="3.20.20.70:FF:000049">
    <property type="entry name" value="Thiazole synthase"/>
    <property type="match status" value="1"/>
</dbReference>
<dbReference type="Gene3D" id="3.20.20.70">
    <property type="entry name" value="Aldolase class I"/>
    <property type="match status" value="1"/>
</dbReference>
<dbReference type="HAMAP" id="MF_00443">
    <property type="entry name" value="ThiG"/>
    <property type="match status" value="1"/>
</dbReference>
<dbReference type="InterPro" id="IPR013785">
    <property type="entry name" value="Aldolase_TIM"/>
</dbReference>
<dbReference type="InterPro" id="IPR033983">
    <property type="entry name" value="Thiazole_synthase_ThiG"/>
</dbReference>
<dbReference type="InterPro" id="IPR008867">
    <property type="entry name" value="ThiG"/>
</dbReference>
<dbReference type="PANTHER" id="PTHR34266">
    <property type="entry name" value="THIAZOLE SYNTHASE"/>
    <property type="match status" value="1"/>
</dbReference>
<dbReference type="PANTHER" id="PTHR34266:SF2">
    <property type="entry name" value="THIAZOLE SYNTHASE"/>
    <property type="match status" value="1"/>
</dbReference>
<dbReference type="Pfam" id="PF05690">
    <property type="entry name" value="ThiG"/>
    <property type="match status" value="1"/>
</dbReference>
<dbReference type="SUPFAM" id="SSF110399">
    <property type="entry name" value="ThiG-like"/>
    <property type="match status" value="1"/>
</dbReference>